<name>NUOA_YERP3</name>
<feature type="chain" id="PRO_0000362800" description="NADH-quinone oxidoreductase subunit A">
    <location>
        <begin position="1"/>
        <end position="166"/>
    </location>
</feature>
<feature type="transmembrane region" description="Helical" evidence="1">
    <location>
        <begin position="16"/>
        <end position="36"/>
    </location>
</feature>
<feature type="transmembrane region" description="Helical" evidence="1">
    <location>
        <begin position="68"/>
        <end position="88"/>
    </location>
</feature>
<feature type="transmembrane region" description="Helical" evidence="1">
    <location>
        <begin position="98"/>
        <end position="118"/>
    </location>
</feature>
<feature type="region of interest" description="Disordered" evidence="2">
    <location>
        <begin position="141"/>
        <end position="166"/>
    </location>
</feature>
<dbReference type="EC" id="7.1.1.-" evidence="1"/>
<dbReference type="EMBL" id="CP000720">
    <property type="protein sequence ID" value="ABS46044.1"/>
    <property type="molecule type" value="Genomic_DNA"/>
</dbReference>
<dbReference type="RefSeq" id="WP_002210279.1">
    <property type="nucleotide sequence ID" value="NC_009708.1"/>
</dbReference>
<dbReference type="SMR" id="A7FGQ5"/>
<dbReference type="KEGG" id="ypi:YpsIP31758_1454"/>
<dbReference type="HOGENOM" id="CLU_119549_2_1_6"/>
<dbReference type="Proteomes" id="UP000002412">
    <property type="component" value="Chromosome"/>
</dbReference>
<dbReference type="GO" id="GO:0030964">
    <property type="term" value="C:NADH dehydrogenase complex"/>
    <property type="evidence" value="ECO:0007669"/>
    <property type="project" value="TreeGrafter"/>
</dbReference>
<dbReference type="GO" id="GO:0005886">
    <property type="term" value="C:plasma membrane"/>
    <property type="evidence" value="ECO:0007669"/>
    <property type="project" value="UniProtKB-SubCell"/>
</dbReference>
<dbReference type="GO" id="GO:0008137">
    <property type="term" value="F:NADH dehydrogenase (ubiquinone) activity"/>
    <property type="evidence" value="ECO:0007669"/>
    <property type="project" value="InterPro"/>
</dbReference>
<dbReference type="GO" id="GO:0050136">
    <property type="term" value="F:NADH:ubiquinone reductase (non-electrogenic) activity"/>
    <property type="evidence" value="ECO:0007669"/>
    <property type="project" value="UniProtKB-UniRule"/>
</dbReference>
<dbReference type="GO" id="GO:0048038">
    <property type="term" value="F:quinone binding"/>
    <property type="evidence" value="ECO:0007669"/>
    <property type="project" value="UniProtKB-KW"/>
</dbReference>
<dbReference type="FunFam" id="1.20.58.1610:FF:000003">
    <property type="entry name" value="NADH-quinone oxidoreductase subunit A"/>
    <property type="match status" value="1"/>
</dbReference>
<dbReference type="Gene3D" id="1.20.58.1610">
    <property type="entry name" value="NADH:ubiquinone/plastoquinone oxidoreductase, chain 3"/>
    <property type="match status" value="1"/>
</dbReference>
<dbReference type="HAMAP" id="MF_01394">
    <property type="entry name" value="NDH1_NuoA"/>
    <property type="match status" value="1"/>
</dbReference>
<dbReference type="InterPro" id="IPR023043">
    <property type="entry name" value="NAD(P)H_OxRDtase_bac/plastid"/>
</dbReference>
<dbReference type="InterPro" id="IPR000440">
    <property type="entry name" value="NADH_UbQ/plastoQ_OxRdtase_su3"/>
</dbReference>
<dbReference type="InterPro" id="IPR038430">
    <property type="entry name" value="NDAH_ubi_oxred_su3_sf"/>
</dbReference>
<dbReference type="PANTHER" id="PTHR11058:SF21">
    <property type="entry name" value="NADH-QUINONE OXIDOREDUCTASE SUBUNIT A"/>
    <property type="match status" value="1"/>
</dbReference>
<dbReference type="PANTHER" id="PTHR11058">
    <property type="entry name" value="NADH-UBIQUINONE OXIDOREDUCTASE CHAIN 3"/>
    <property type="match status" value="1"/>
</dbReference>
<dbReference type="Pfam" id="PF00507">
    <property type="entry name" value="Oxidored_q4"/>
    <property type="match status" value="1"/>
</dbReference>
<proteinExistence type="inferred from homology"/>
<keyword id="KW-0997">Cell inner membrane</keyword>
<keyword id="KW-1003">Cell membrane</keyword>
<keyword id="KW-0472">Membrane</keyword>
<keyword id="KW-0520">NAD</keyword>
<keyword id="KW-0874">Quinone</keyword>
<keyword id="KW-1278">Translocase</keyword>
<keyword id="KW-0812">Transmembrane</keyword>
<keyword id="KW-1133">Transmembrane helix</keyword>
<keyword id="KW-0813">Transport</keyword>
<keyword id="KW-0830">Ubiquinone</keyword>
<organism>
    <name type="scientific">Yersinia pseudotuberculosis serotype O:1b (strain IP 31758)</name>
    <dbReference type="NCBI Taxonomy" id="349747"/>
    <lineage>
        <taxon>Bacteria</taxon>
        <taxon>Pseudomonadati</taxon>
        <taxon>Pseudomonadota</taxon>
        <taxon>Gammaproteobacteria</taxon>
        <taxon>Enterobacterales</taxon>
        <taxon>Yersiniaceae</taxon>
        <taxon>Yersinia</taxon>
    </lineage>
</organism>
<protein>
    <recommendedName>
        <fullName evidence="1">NADH-quinone oxidoreductase subunit A</fullName>
        <ecNumber evidence="1">7.1.1.-</ecNumber>
    </recommendedName>
    <alternativeName>
        <fullName evidence="1">NADH dehydrogenase I subunit A</fullName>
    </alternativeName>
    <alternativeName>
        <fullName evidence="1">NDH-1 subunit A</fullName>
    </alternativeName>
    <alternativeName>
        <fullName evidence="1">NUO1</fullName>
    </alternativeName>
</protein>
<gene>
    <name evidence="1" type="primary">nuoA</name>
    <name type="ordered locus">YpsIP31758_1454</name>
</gene>
<sequence length="166" mass="18376">MRMSTTTEIIAHHWAFAVFLIGAVGLCGLMLLGAYFLGGRAQARAKNVPYESGIDSVGSARMRLSAKFYLVAMFFVIFDVEALYLYAWSISIRESGWIGFIEAAIFILVLLAGLFYLVRIGALDWTPTRSNRRVSKPSTVRYASSHPQDISQELSVAGSQQANESR</sequence>
<accession>A7FGQ5</accession>
<evidence type="ECO:0000255" key="1">
    <source>
        <dbReference type="HAMAP-Rule" id="MF_01394"/>
    </source>
</evidence>
<evidence type="ECO:0000256" key="2">
    <source>
        <dbReference type="SAM" id="MobiDB-lite"/>
    </source>
</evidence>
<comment type="function">
    <text evidence="1">NDH-1 shuttles electrons from NADH, via FMN and iron-sulfur (Fe-S) centers, to quinones in the respiratory chain. The immediate electron acceptor for the enzyme in this species is believed to be ubiquinone. Couples the redox reaction to proton translocation (for every two electrons transferred, four hydrogen ions are translocated across the cytoplasmic membrane), and thus conserves the redox energy in a proton gradient.</text>
</comment>
<comment type="catalytic activity">
    <reaction evidence="1">
        <text>a quinone + NADH + 5 H(+)(in) = a quinol + NAD(+) + 4 H(+)(out)</text>
        <dbReference type="Rhea" id="RHEA:57888"/>
        <dbReference type="ChEBI" id="CHEBI:15378"/>
        <dbReference type="ChEBI" id="CHEBI:24646"/>
        <dbReference type="ChEBI" id="CHEBI:57540"/>
        <dbReference type="ChEBI" id="CHEBI:57945"/>
        <dbReference type="ChEBI" id="CHEBI:132124"/>
    </reaction>
</comment>
<comment type="subunit">
    <text evidence="1">NDH-1 is composed of 13 different subunits. Subunits NuoA, H, J, K, L, M, N constitute the membrane sector of the complex.</text>
</comment>
<comment type="subcellular location">
    <subcellularLocation>
        <location evidence="1">Cell inner membrane</location>
        <topology evidence="1">Multi-pass membrane protein</topology>
    </subcellularLocation>
</comment>
<comment type="similarity">
    <text evidence="1">Belongs to the complex I subunit 3 family.</text>
</comment>
<reference key="1">
    <citation type="journal article" date="2007" name="PLoS Genet.">
        <title>The complete genome sequence of Yersinia pseudotuberculosis IP31758, the causative agent of Far East scarlet-like fever.</title>
        <authorList>
            <person name="Eppinger M."/>
            <person name="Rosovitz M.J."/>
            <person name="Fricke W.F."/>
            <person name="Rasko D.A."/>
            <person name="Kokorina G."/>
            <person name="Fayolle C."/>
            <person name="Lindler L.E."/>
            <person name="Carniel E."/>
            <person name="Ravel J."/>
        </authorList>
    </citation>
    <scope>NUCLEOTIDE SEQUENCE [LARGE SCALE GENOMIC DNA]</scope>
    <source>
        <strain>IP 31758</strain>
    </source>
</reference>